<keyword id="KW-0002">3D-structure</keyword>
<keyword id="KW-0413">Isomerase</keyword>
<keyword id="KW-0460">Magnesium</keyword>
<keyword id="KW-0479">Metal-binding</keyword>
<sequence>MPTTIQAISAEAINLPLTEPFAIASGAQAVAANVLVKVQLADGTLGLGEAAPFPAVSGETQTGTSAAIERLQSHLLGADVRGWRKLAAMLDHAEHEAAAARCGLEMAMLDALTRHYHMPLHVFFGGVSKQLETDMTITAGDEVHAAASAKAILARGIKSIKVKTAGVDVAYDLARLRAIHQAAPTAPLIVDGNCGYDVERALAFCAACKAESIPMVLFEQPLPREDWAGMAQVTAQSGFAVAADESARSAHDVLRIAREGTASVINIKLMKAGVAEGLKMIAIAQAAGLGLMIGGMVESILAMSFSANLAAGNGGFDFIDLDTPLFIAEHPFIGGFAQTGGTLQLADVAGHGVNLA</sequence>
<reference key="1">
    <citation type="journal article" date="2011" name="Stand. Genomic Sci.">
        <title>Complete genome sequence of the filamentous gliding predatory bacterium Herpetosiphon aurantiacus type strain (114-95(T)).</title>
        <authorList>
            <person name="Kiss H."/>
            <person name="Nett M."/>
            <person name="Domin N."/>
            <person name="Martin K."/>
            <person name="Maresca J.A."/>
            <person name="Copeland A."/>
            <person name="Lapidus A."/>
            <person name="Lucas S."/>
            <person name="Berry K.W."/>
            <person name="Glavina Del Rio T."/>
            <person name="Dalin E."/>
            <person name="Tice H."/>
            <person name="Pitluck S."/>
            <person name="Richardson P."/>
            <person name="Bruce D."/>
            <person name="Goodwin L."/>
            <person name="Han C."/>
            <person name="Detter J.C."/>
            <person name="Schmutz J."/>
            <person name="Brettin T."/>
            <person name="Land M."/>
            <person name="Hauser L."/>
            <person name="Kyrpides N.C."/>
            <person name="Ivanova N."/>
            <person name="Goeker M."/>
            <person name="Woyke T."/>
            <person name="Klenk H.P."/>
            <person name="Bryant D.A."/>
        </authorList>
    </citation>
    <scope>NUCLEOTIDE SEQUENCE [LARGE SCALE GENOMIC DNA]</scope>
    <source>
        <strain>ATCC 23779 / DSM 785 / 114-95</strain>
    </source>
</reference>
<reference key="2">
    <citation type="journal article" date="2012" name="Proc. Natl. Acad. Sci. U.S.A.">
        <title>Homology models guide discovery of diverse enzyme specificities among dipeptide epimerases in the enolase superfamily.</title>
        <authorList>
            <person name="Lukk T."/>
            <person name="Sakai A."/>
            <person name="Kalyanaraman C."/>
            <person name="Brown S.D."/>
            <person name="Imker H.J."/>
            <person name="Song L."/>
            <person name="Fedorov A.A."/>
            <person name="Fedorov E.V."/>
            <person name="Toro R."/>
            <person name="Hillerich B."/>
            <person name="Seidel R."/>
            <person name="Patskovsky Y."/>
            <person name="Vetting M.W."/>
            <person name="Nair S.K."/>
            <person name="Babbitt P.C."/>
            <person name="Almo S.C."/>
            <person name="Gerlt J.A."/>
            <person name="Jacobson M.P."/>
        </authorList>
    </citation>
    <scope>X-RAY CRYSTALLOGRAPHY (2.10 ANGSTROMS) OF 2-355</scope>
    <scope>FUNCTION</scope>
    <scope>COFACTOR</scope>
    <scope>BIOPHYSICOCHEMICAL PROPERTIES</scope>
    <source>
        <strain>ATCC 23779 / DSM 785 / 114-95</strain>
    </source>
</reference>
<name>AREP_HERA2</name>
<protein>
    <recommendedName>
        <fullName>Aromatic dipeptide epimerase</fullName>
        <ecNumber>5.1.1.-</ecNumber>
    </recommendedName>
</protein>
<feature type="chain" id="PRO_0000429648" description="Aromatic dipeptide epimerase">
    <location>
        <begin position="1"/>
        <end position="356"/>
    </location>
</feature>
<feature type="binding site" evidence="1">
    <location>
        <position position="136"/>
    </location>
    <ligand>
        <name>substrate</name>
    </ligand>
</feature>
<feature type="binding site" evidence="1">
    <location>
        <begin position="161"/>
        <end position="163"/>
    </location>
    <ligand>
        <name>substrate</name>
    </ligand>
</feature>
<feature type="binding site" evidence="3">
    <location>
        <position position="191"/>
    </location>
    <ligand>
        <name>Mg(2+)</name>
        <dbReference type="ChEBI" id="CHEBI:18420"/>
    </ligand>
</feature>
<feature type="binding site" evidence="3">
    <location>
        <position position="219"/>
    </location>
    <ligand>
        <name>Mg(2+)</name>
        <dbReference type="ChEBI" id="CHEBI:18420"/>
    </ligand>
</feature>
<feature type="binding site" evidence="3">
    <location>
        <position position="244"/>
    </location>
    <ligand>
        <name>Mg(2+)</name>
        <dbReference type="ChEBI" id="CHEBI:18420"/>
    </ligand>
</feature>
<feature type="binding site" evidence="1">
    <location>
        <position position="268"/>
    </location>
    <ligand>
        <name>substrate</name>
    </ligand>
</feature>
<feature type="binding site" evidence="1">
    <location>
        <begin position="320"/>
        <end position="322"/>
    </location>
    <ligand>
        <name>substrate</name>
    </ligand>
</feature>
<feature type="strand" evidence="4">
    <location>
        <begin position="4"/>
        <end position="18"/>
    </location>
</feature>
<feature type="strand" evidence="4">
    <location>
        <begin position="21"/>
        <end position="23"/>
    </location>
</feature>
<feature type="strand" evidence="4">
    <location>
        <begin position="26"/>
        <end position="28"/>
    </location>
</feature>
<feature type="strand" evidence="4">
    <location>
        <begin position="30"/>
        <end position="40"/>
    </location>
</feature>
<feature type="strand" evidence="4">
    <location>
        <begin position="45"/>
        <end position="50"/>
    </location>
</feature>
<feature type="turn" evidence="4">
    <location>
        <begin position="55"/>
        <end position="57"/>
    </location>
</feature>
<feature type="helix" evidence="4">
    <location>
        <begin position="61"/>
        <end position="71"/>
    </location>
</feature>
<feature type="helix" evidence="4">
    <location>
        <begin position="72"/>
        <end position="74"/>
    </location>
</feature>
<feature type="turn" evidence="4">
    <location>
        <begin position="75"/>
        <end position="77"/>
    </location>
</feature>
<feature type="helix" evidence="4">
    <location>
        <begin position="80"/>
        <end position="82"/>
    </location>
</feature>
<feature type="helix" evidence="4">
    <location>
        <begin position="83"/>
        <end position="93"/>
    </location>
</feature>
<feature type="helix" evidence="4">
    <location>
        <begin position="98"/>
        <end position="115"/>
    </location>
</feature>
<feature type="helix" evidence="4">
    <location>
        <begin position="120"/>
        <end position="123"/>
    </location>
</feature>
<feature type="strand" evidence="4">
    <location>
        <begin position="129"/>
        <end position="133"/>
    </location>
</feature>
<feature type="strand" evidence="4">
    <location>
        <begin position="135"/>
        <end position="137"/>
    </location>
</feature>
<feature type="helix" evidence="4">
    <location>
        <begin position="142"/>
        <end position="154"/>
    </location>
</feature>
<feature type="strand" evidence="4">
    <location>
        <begin position="160"/>
        <end position="163"/>
    </location>
</feature>
<feature type="helix" evidence="4">
    <location>
        <begin position="169"/>
        <end position="182"/>
    </location>
</feature>
<feature type="strand" evidence="4">
    <location>
        <begin position="183"/>
        <end position="185"/>
    </location>
</feature>
<feature type="strand" evidence="4">
    <location>
        <begin position="188"/>
        <end position="191"/>
    </location>
</feature>
<feature type="helix" evidence="4">
    <location>
        <begin position="198"/>
        <end position="210"/>
    </location>
</feature>
<feature type="strand" evidence="4">
    <location>
        <begin position="215"/>
        <end position="219"/>
    </location>
</feature>
<feature type="helix" evidence="4">
    <location>
        <begin position="227"/>
        <end position="236"/>
    </location>
</feature>
<feature type="strand" evidence="4">
    <location>
        <begin position="237"/>
        <end position="239"/>
    </location>
</feature>
<feature type="strand" evidence="4">
    <location>
        <begin position="241"/>
        <end position="244"/>
    </location>
</feature>
<feature type="helix" evidence="4">
    <location>
        <begin position="250"/>
        <end position="259"/>
    </location>
</feature>
<feature type="strand" evidence="4">
    <location>
        <begin position="263"/>
        <end position="267"/>
    </location>
</feature>
<feature type="helix" evidence="4">
    <location>
        <begin position="269"/>
        <end position="272"/>
    </location>
</feature>
<feature type="helix" evidence="4">
    <location>
        <begin position="274"/>
        <end position="287"/>
    </location>
</feature>
<feature type="strand" evidence="4">
    <location>
        <begin position="290"/>
        <end position="293"/>
    </location>
</feature>
<feature type="helix" evidence="4">
    <location>
        <begin position="300"/>
        <end position="313"/>
    </location>
</feature>
<feature type="strand" evidence="4">
    <location>
        <begin position="316"/>
        <end position="319"/>
    </location>
</feature>
<feature type="helix" evidence="4">
    <location>
        <begin position="323"/>
        <end position="326"/>
    </location>
</feature>
<feature type="strand" evidence="4">
    <location>
        <begin position="331"/>
        <end position="335"/>
    </location>
</feature>
<feature type="strand" evidence="4">
    <location>
        <begin position="337"/>
        <end position="339"/>
    </location>
</feature>
<feature type="strand" evidence="4">
    <location>
        <begin position="342"/>
        <end position="344"/>
    </location>
</feature>
<feature type="strand" evidence="4">
    <location>
        <begin position="353"/>
        <end position="355"/>
    </location>
</feature>
<organism>
    <name type="scientific">Herpetosiphon aurantiacus (strain ATCC 23779 / DSM 785 / 114-95)</name>
    <dbReference type="NCBI Taxonomy" id="316274"/>
    <lineage>
        <taxon>Bacteria</taxon>
        <taxon>Bacillati</taxon>
        <taxon>Chloroflexota</taxon>
        <taxon>Chloroflexia</taxon>
        <taxon>Herpetosiphonales</taxon>
        <taxon>Herpetosiphonaceae</taxon>
        <taxon>Herpetosiphon</taxon>
    </lineage>
</organism>
<comment type="function">
    <text evidence="2">Has epimerase activity with a variety of hydrophobic dipeptides (in vitro). Enzyme activity is highest with L-Phe-L-Tyr, but is still relatively low, suggesting that L-Phe-L-Tyr is not the physiological substrate.</text>
</comment>
<comment type="cofactor">
    <cofactor evidence="2">
        <name>Mg(2+)</name>
        <dbReference type="ChEBI" id="CHEBI:18420"/>
    </cofactor>
    <text evidence="2">Binds 1 Mg(2+) ion per subunit.</text>
</comment>
<comment type="biophysicochemical properties">
    <kinetics>
        <KM evidence="2">4.8 mM for L-Phe-L-Tyr</KM>
        <text>kcat is 4.7 sec(-1) for epimerization of L-Phe-L-Tyr.</text>
    </kinetics>
</comment>
<comment type="miscellaneous">
    <text>Part of a large, functionally divergent protein family. Protein modeling and substrate docking were used to predict the substrate specificity, prior to biochemical analysis.</text>
</comment>
<comment type="similarity">
    <text evidence="3">Belongs to the mandelate racemase/muconate lactonizing enzyme family.</text>
</comment>
<dbReference type="EC" id="5.1.1.-"/>
<dbReference type="EMBL" id="CP000875">
    <property type="protein sequence ID" value="ABX03762.1"/>
    <property type="molecule type" value="Genomic_DNA"/>
</dbReference>
<dbReference type="PDB" id="3IK4">
    <property type="method" value="X-ray"/>
    <property type="resolution" value="2.10 A"/>
    <property type="chains" value="A/B/C/D=2-355"/>
</dbReference>
<dbReference type="PDBsum" id="3IK4"/>
<dbReference type="SMR" id="A9B055"/>
<dbReference type="FunCoup" id="A9B055">
    <property type="interactions" value="151"/>
</dbReference>
<dbReference type="STRING" id="316274.Haur_1114"/>
<dbReference type="KEGG" id="hau:Haur_1114"/>
<dbReference type="eggNOG" id="COG4948">
    <property type="taxonomic scope" value="Bacteria"/>
</dbReference>
<dbReference type="HOGENOM" id="CLU_030273_4_1_0"/>
<dbReference type="InParanoid" id="A9B055"/>
<dbReference type="BioCyc" id="HAUR316274:GHYA-1135-MONOMER"/>
<dbReference type="EvolutionaryTrace" id="A9B055"/>
<dbReference type="Proteomes" id="UP000000787">
    <property type="component" value="Chromosome"/>
</dbReference>
<dbReference type="GO" id="GO:0000287">
    <property type="term" value="F:magnesium ion binding"/>
    <property type="evidence" value="ECO:0000314"/>
    <property type="project" value="UniProtKB"/>
</dbReference>
<dbReference type="GO" id="GO:0016854">
    <property type="term" value="F:racemase and epimerase activity"/>
    <property type="evidence" value="ECO:0000314"/>
    <property type="project" value="UniProtKB"/>
</dbReference>
<dbReference type="GO" id="GO:0016855">
    <property type="term" value="F:racemase and epimerase activity, acting on amino acids and derivatives"/>
    <property type="evidence" value="ECO:0007669"/>
    <property type="project" value="InterPro"/>
</dbReference>
<dbReference type="GO" id="GO:0006518">
    <property type="term" value="P:peptide metabolic process"/>
    <property type="evidence" value="ECO:0000314"/>
    <property type="project" value="UniProtKB"/>
</dbReference>
<dbReference type="CDD" id="cd03319">
    <property type="entry name" value="L-Ala-DL-Glu_epimerase"/>
    <property type="match status" value="1"/>
</dbReference>
<dbReference type="FunFam" id="3.30.390.10:FF:000009">
    <property type="entry name" value="Hydrophobic dipeptide epimerase"/>
    <property type="match status" value="1"/>
</dbReference>
<dbReference type="Gene3D" id="3.20.20.120">
    <property type="entry name" value="Enolase-like C-terminal domain"/>
    <property type="match status" value="1"/>
</dbReference>
<dbReference type="Gene3D" id="3.30.390.10">
    <property type="entry name" value="Enolase-like, N-terminal domain"/>
    <property type="match status" value="1"/>
</dbReference>
<dbReference type="InterPro" id="IPR034603">
    <property type="entry name" value="Dipeptide_epimerase"/>
</dbReference>
<dbReference type="InterPro" id="IPR036849">
    <property type="entry name" value="Enolase-like_C_sf"/>
</dbReference>
<dbReference type="InterPro" id="IPR029017">
    <property type="entry name" value="Enolase-like_N"/>
</dbReference>
<dbReference type="InterPro" id="IPR029065">
    <property type="entry name" value="Enolase_C-like"/>
</dbReference>
<dbReference type="InterPro" id="IPR013342">
    <property type="entry name" value="Mandelate_racemase_C"/>
</dbReference>
<dbReference type="InterPro" id="IPR013341">
    <property type="entry name" value="Mandelate_racemase_N_dom"/>
</dbReference>
<dbReference type="PANTHER" id="PTHR48073:SF2">
    <property type="entry name" value="O-SUCCINYLBENZOATE SYNTHASE"/>
    <property type="match status" value="1"/>
</dbReference>
<dbReference type="PANTHER" id="PTHR48073">
    <property type="entry name" value="O-SUCCINYLBENZOATE SYNTHASE-RELATED"/>
    <property type="match status" value="1"/>
</dbReference>
<dbReference type="Pfam" id="PF13378">
    <property type="entry name" value="MR_MLE_C"/>
    <property type="match status" value="1"/>
</dbReference>
<dbReference type="Pfam" id="PF02746">
    <property type="entry name" value="MR_MLE_N"/>
    <property type="match status" value="1"/>
</dbReference>
<dbReference type="SFLD" id="SFLDG00180">
    <property type="entry name" value="muconate_cycloisomerase"/>
    <property type="match status" value="1"/>
</dbReference>
<dbReference type="SFLD" id="SFLDF00009">
    <property type="entry name" value="o-succinylbenzoate_synthase"/>
    <property type="match status" value="1"/>
</dbReference>
<dbReference type="SMART" id="SM00922">
    <property type="entry name" value="MR_MLE"/>
    <property type="match status" value="1"/>
</dbReference>
<dbReference type="SUPFAM" id="SSF51604">
    <property type="entry name" value="Enolase C-terminal domain-like"/>
    <property type="match status" value="1"/>
</dbReference>
<dbReference type="SUPFAM" id="SSF54826">
    <property type="entry name" value="Enolase N-terminal domain-like"/>
    <property type="match status" value="1"/>
</dbReference>
<gene>
    <name type="ordered locus">Haur_1114</name>
</gene>
<evidence type="ECO:0000250" key="1"/>
<evidence type="ECO:0000269" key="2">
    <source>
    </source>
</evidence>
<evidence type="ECO:0000305" key="3"/>
<evidence type="ECO:0007829" key="4">
    <source>
        <dbReference type="PDB" id="3IK4"/>
    </source>
</evidence>
<proteinExistence type="evidence at protein level"/>
<accession>A9B055</accession>